<organism>
    <name type="scientific">Bos taurus</name>
    <name type="common">Bovine</name>
    <dbReference type="NCBI Taxonomy" id="9913"/>
    <lineage>
        <taxon>Eukaryota</taxon>
        <taxon>Metazoa</taxon>
        <taxon>Chordata</taxon>
        <taxon>Craniata</taxon>
        <taxon>Vertebrata</taxon>
        <taxon>Euteleostomi</taxon>
        <taxon>Mammalia</taxon>
        <taxon>Eutheria</taxon>
        <taxon>Laurasiatheria</taxon>
        <taxon>Artiodactyla</taxon>
        <taxon>Ruminantia</taxon>
        <taxon>Pecora</taxon>
        <taxon>Bovidae</taxon>
        <taxon>Bovinae</taxon>
        <taxon>Bos</taxon>
    </lineage>
</organism>
<name>ASF1A_BOVIN</name>
<proteinExistence type="evidence at transcript level"/>
<evidence type="ECO:0000250" key="1"/>
<evidence type="ECO:0000250" key="2">
    <source>
        <dbReference type="UniProtKB" id="Q9Y294"/>
    </source>
</evidence>
<evidence type="ECO:0000305" key="3"/>
<gene>
    <name type="primary">ASF1A</name>
</gene>
<protein>
    <recommendedName>
        <fullName>Histone chaperone ASF1A</fullName>
    </recommendedName>
    <alternativeName>
        <fullName>Anti-silencing function protein 1 homolog A</fullName>
    </alternativeName>
</protein>
<feature type="chain" id="PRO_0000284011" description="Histone chaperone ASF1A">
    <location>
        <begin position="1"/>
        <end position="204"/>
    </location>
</feature>
<feature type="region of interest" description="Interaction with histone H3, CHAF1B, and HIRA" evidence="1">
    <location>
        <begin position="1"/>
        <end position="156"/>
    </location>
</feature>
<feature type="region of interest" description="Required for interaction with HIRA" evidence="1">
    <location>
        <begin position="155"/>
        <end position="204"/>
    </location>
</feature>
<feature type="short sequence motif" description="Required for interaction with HIRA" evidence="1">
    <location>
        <begin position="31"/>
        <end position="37"/>
    </location>
</feature>
<feature type="modified residue" description="Phosphoserine; by TLK2" evidence="2">
    <location>
        <position position="192"/>
    </location>
</feature>
<dbReference type="EMBL" id="BC112651">
    <property type="protein sequence ID" value="AAI12652.1"/>
    <property type="molecule type" value="mRNA"/>
</dbReference>
<dbReference type="RefSeq" id="NP_001069961.1">
    <property type="nucleotide sequence ID" value="NM_001076493.2"/>
</dbReference>
<dbReference type="BMRB" id="Q2KIG1"/>
<dbReference type="SMR" id="Q2KIG1"/>
<dbReference type="FunCoup" id="Q2KIG1">
    <property type="interactions" value="3448"/>
</dbReference>
<dbReference type="STRING" id="9913.ENSBTAP00000002664"/>
<dbReference type="PaxDb" id="9913-ENSBTAP00000002664"/>
<dbReference type="Ensembl" id="ENSBTAT00000002664.5">
    <property type="protein sequence ID" value="ENSBTAP00000002664.3"/>
    <property type="gene ID" value="ENSBTAG00000002058.5"/>
</dbReference>
<dbReference type="GeneID" id="618099"/>
<dbReference type="KEGG" id="bta:618099"/>
<dbReference type="CTD" id="25842"/>
<dbReference type="VEuPathDB" id="HostDB:ENSBTAG00000002058"/>
<dbReference type="VGNC" id="VGNC:50604">
    <property type="gene designation" value="ASF1A"/>
</dbReference>
<dbReference type="eggNOG" id="KOG3265">
    <property type="taxonomic scope" value="Eukaryota"/>
</dbReference>
<dbReference type="GeneTree" id="ENSGT00390000004692"/>
<dbReference type="HOGENOM" id="CLU_060354_1_2_1"/>
<dbReference type="InParanoid" id="Q2KIG1"/>
<dbReference type="OMA" id="DYADQEM"/>
<dbReference type="OrthoDB" id="29755at2759"/>
<dbReference type="TreeFam" id="TF106429"/>
<dbReference type="Reactome" id="R-BTA-2559584">
    <property type="pathway name" value="Formation of Senescence-Associated Heterochromatin Foci (SAHF)"/>
</dbReference>
<dbReference type="Proteomes" id="UP000009136">
    <property type="component" value="Chromosome 9"/>
</dbReference>
<dbReference type="Bgee" id="ENSBTAG00000002058">
    <property type="expression patterns" value="Expressed in oocyte and 107 other cell types or tissues"/>
</dbReference>
<dbReference type="GO" id="GO:0000785">
    <property type="term" value="C:chromatin"/>
    <property type="evidence" value="ECO:0000318"/>
    <property type="project" value="GO_Central"/>
</dbReference>
<dbReference type="GO" id="GO:0005654">
    <property type="term" value="C:nucleoplasm"/>
    <property type="evidence" value="ECO:0007669"/>
    <property type="project" value="Ensembl"/>
</dbReference>
<dbReference type="GO" id="GO:0005634">
    <property type="term" value="C:nucleus"/>
    <property type="evidence" value="ECO:0000318"/>
    <property type="project" value="GO_Central"/>
</dbReference>
<dbReference type="GO" id="GO:0032991">
    <property type="term" value="C:protein-containing complex"/>
    <property type="evidence" value="ECO:0007669"/>
    <property type="project" value="Ensembl"/>
</dbReference>
<dbReference type="GO" id="GO:0035861">
    <property type="term" value="C:site of double-strand break"/>
    <property type="evidence" value="ECO:0007669"/>
    <property type="project" value="Ensembl"/>
</dbReference>
<dbReference type="GO" id="GO:0003682">
    <property type="term" value="F:chromatin binding"/>
    <property type="evidence" value="ECO:0007669"/>
    <property type="project" value="Ensembl"/>
</dbReference>
<dbReference type="GO" id="GO:0042393">
    <property type="term" value="F:histone binding"/>
    <property type="evidence" value="ECO:0000318"/>
    <property type="project" value="GO_Central"/>
</dbReference>
<dbReference type="GO" id="GO:0140713">
    <property type="term" value="F:histone chaperone activity"/>
    <property type="evidence" value="ECO:0007669"/>
    <property type="project" value="Ensembl"/>
</dbReference>
<dbReference type="GO" id="GO:0006281">
    <property type="term" value="P:DNA repair"/>
    <property type="evidence" value="ECO:0007669"/>
    <property type="project" value="Ensembl"/>
</dbReference>
<dbReference type="GO" id="GO:0140861">
    <property type="term" value="P:DNA repair-dependent chromatin remodeling"/>
    <property type="evidence" value="ECO:0007669"/>
    <property type="project" value="Ensembl"/>
</dbReference>
<dbReference type="GO" id="GO:0006335">
    <property type="term" value="P:DNA replication-dependent chromatin assembly"/>
    <property type="evidence" value="ECO:0000318"/>
    <property type="project" value="GO_Central"/>
</dbReference>
<dbReference type="GO" id="GO:0042692">
    <property type="term" value="P:muscle cell differentiation"/>
    <property type="evidence" value="ECO:0007669"/>
    <property type="project" value="Ensembl"/>
</dbReference>
<dbReference type="GO" id="GO:0006334">
    <property type="term" value="P:nucleosome assembly"/>
    <property type="evidence" value="ECO:0007669"/>
    <property type="project" value="Ensembl"/>
</dbReference>
<dbReference type="GO" id="GO:0001649">
    <property type="term" value="P:osteoblast differentiation"/>
    <property type="evidence" value="ECO:0007669"/>
    <property type="project" value="Ensembl"/>
</dbReference>
<dbReference type="GO" id="GO:0031297">
    <property type="term" value="P:replication fork processing"/>
    <property type="evidence" value="ECO:0007669"/>
    <property type="project" value="Ensembl"/>
</dbReference>
<dbReference type="FunFam" id="2.60.40.1490:FF:000001">
    <property type="entry name" value="Histone chaperone ASF1"/>
    <property type="match status" value="1"/>
</dbReference>
<dbReference type="Gene3D" id="2.60.40.1490">
    <property type="entry name" value="Histone chaperone ASF1-like"/>
    <property type="match status" value="1"/>
</dbReference>
<dbReference type="InterPro" id="IPR006818">
    <property type="entry name" value="ASF1-like"/>
</dbReference>
<dbReference type="InterPro" id="IPR036747">
    <property type="entry name" value="ASF1-like_sf"/>
</dbReference>
<dbReference type="PANTHER" id="PTHR12040">
    <property type="entry name" value="ANTI-SILENCING PROTEIN 1"/>
    <property type="match status" value="1"/>
</dbReference>
<dbReference type="PANTHER" id="PTHR12040:SF8">
    <property type="entry name" value="HISTONE CHAPERONE ASF1A"/>
    <property type="match status" value="1"/>
</dbReference>
<dbReference type="Pfam" id="PF04729">
    <property type="entry name" value="ASF1_hist_chap"/>
    <property type="match status" value="1"/>
</dbReference>
<dbReference type="SUPFAM" id="SSF101546">
    <property type="entry name" value="ASF1-like"/>
    <property type="match status" value="1"/>
</dbReference>
<sequence length="204" mass="22938">MAKVQVNNVVVLDNPSPFYNPFQFEITFECIEDLSEDLEWKIIYVGSAESEEYDQVLDSVLVGPVPAGRHMFVFQADAPNPGLIPDADAVGVTVVLITCTYRGQEFIRVGYYVNNEYTETELRENPPVKPDFSKLQRNILASNPRVTRFHINWEDNTEKLEDAESSNPNLPSLLSTDALPSASKGWSTSENSLNVMLESHMDCM</sequence>
<comment type="function">
    <text evidence="2">Histone chaperone that facilitates histone deposition and histone exchange and removal during nucleosome assembly and disassembly. Cooperates with chromatin assembly factor 1 (CAF-1) to promote replication-dependent chromatin assembly and with HIRA to promote replication-independent chromatin assembly. Promotes homologous recombination-mediated repair of double-strand breaks (DSBs) at stalled or collapsed replication forks: acts by mediating histone replacement at DSBs, leading to recruitment of the MMS22L-TONSL complex and subsequent loading of RAD51. Also involved in the nuclear import of the histone H3-H4 dimer together with importin-4 (IPO4): specifically recognizes and binds newly synthesized histones with the monomethylation of H3 'Lys-9' and acetylation at 'Lys-14' (H3K9me1K14ac) marks, and diacetylation at 'Lys-5' and 'Lys-12' of H4 (H4K5K12ac) marks in the cytosol. Required for the formation of senescence-associated heterochromatin foci (SAHF) and efficient senescence-associated cell cycle exit.</text>
</comment>
<comment type="subunit">
    <text evidence="2">Interacts with histone H3 (via C-terminus), including histone H3.1, H3.2 and H3.3, and histone H4; the interaction with H3 is direct (By similarity). Probably interacts with the heterodimeric form of H3-H4 taking the place of the second dimer (By similarity). Interacts with the CHAF1A, CHAF1B and RBBP4 subunits of the CAF-1 complex. Interacts with CABIN1, HAT1, HIRA, NASP, TAF1 and UBN1 (By similarity). Found in a soluble complex with NASP and histones H3 and H4; the interaction with NASP is probably indirect and mediated by H3-H4 (By similarity). Interacts with CDAN1. Found in a cytosolic complex with IPO4 and histones H3 and H4 (By similarity). Interacts with CREBBP (By similarity).</text>
</comment>
<comment type="subcellular location">
    <subcellularLocation>
        <location evidence="2">Nucleus</location>
    </subcellularLocation>
</comment>
<comment type="PTM">
    <text evidence="2">Phosphorylated by TLK1 and TLK2. Highly phosphorylated in S-phase and at lower levels in M-phase. TLK2-mediated phosphorylation at Ser-192 prevents proteasome-dependent degradation.</text>
</comment>
<comment type="similarity">
    <text evidence="3">Belongs to the ASF1 family.</text>
</comment>
<accession>Q2KIG1</accession>
<keyword id="KW-0143">Chaperone</keyword>
<keyword id="KW-0156">Chromatin regulator</keyword>
<keyword id="KW-0539">Nucleus</keyword>
<keyword id="KW-0597">Phosphoprotein</keyword>
<keyword id="KW-1185">Reference proteome</keyword>
<keyword id="KW-0804">Transcription</keyword>
<keyword id="KW-0805">Transcription regulation</keyword>
<reference key="1">
    <citation type="submission" date="2006-01" db="EMBL/GenBank/DDBJ databases">
        <authorList>
            <consortium name="NIH - Mammalian Gene Collection (MGC) project"/>
        </authorList>
    </citation>
    <scope>NUCLEOTIDE SEQUENCE [LARGE SCALE MRNA]</scope>
    <source>
        <strain>Hereford</strain>
        <tissue>Testis</tissue>
    </source>
</reference>